<proteinExistence type="inferred from homology"/>
<reference key="1">
    <citation type="journal article" date="2008" name="J. Bacteriol.">
        <title>Comparative genome sequence analysis of multidrug-resistant Acinetobacter baumannii.</title>
        <authorList>
            <person name="Adams M.D."/>
            <person name="Goglin K."/>
            <person name="Molyneaux N."/>
            <person name="Hujer K.M."/>
            <person name="Lavender H."/>
            <person name="Jamison J.J."/>
            <person name="MacDonald I.J."/>
            <person name="Martin K.M."/>
            <person name="Russo T."/>
            <person name="Campagnari A.A."/>
            <person name="Hujer A.M."/>
            <person name="Bonomo R.A."/>
            <person name="Gill S.R."/>
        </authorList>
    </citation>
    <scope>NUCLEOTIDE SEQUENCE [LARGE SCALE GENOMIC DNA]</scope>
    <source>
        <strain>AB307-0294</strain>
    </source>
</reference>
<accession>B7H0K1</accession>
<keyword id="KW-0997">Cell inner membrane</keyword>
<keyword id="KW-1003">Cell membrane</keyword>
<keyword id="KW-0350">Heme biosynthesis</keyword>
<keyword id="KW-0472">Membrane</keyword>
<keyword id="KW-0808">Transferase</keyword>
<keyword id="KW-0812">Transmembrane</keyword>
<keyword id="KW-1133">Transmembrane helix</keyword>
<dbReference type="EC" id="2.5.1.141" evidence="1"/>
<dbReference type="EMBL" id="CP001172">
    <property type="protein sequence ID" value="ACJ58352.1"/>
    <property type="molecule type" value="Genomic_DNA"/>
</dbReference>
<dbReference type="RefSeq" id="WP_000915319.1">
    <property type="nucleotide sequence ID" value="NZ_CP001172.1"/>
</dbReference>
<dbReference type="SMR" id="B7H0K1"/>
<dbReference type="HOGENOM" id="CLU_029631_0_0_6"/>
<dbReference type="UniPathway" id="UPA00834">
    <property type="reaction ID" value="UER00712"/>
</dbReference>
<dbReference type="Proteomes" id="UP000006924">
    <property type="component" value="Chromosome"/>
</dbReference>
<dbReference type="GO" id="GO:0005886">
    <property type="term" value="C:plasma membrane"/>
    <property type="evidence" value="ECO:0007669"/>
    <property type="project" value="UniProtKB-SubCell"/>
</dbReference>
<dbReference type="GO" id="GO:0008495">
    <property type="term" value="F:protoheme IX farnesyltransferase activity"/>
    <property type="evidence" value="ECO:0007669"/>
    <property type="project" value="UniProtKB-UniRule"/>
</dbReference>
<dbReference type="GO" id="GO:0048034">
    <property type="term" value="P:heme O biosynthetic process"/>
    <property type="evidence" value="ECO:0007669"/>
    <property type="project" value="UniProtKB-UniRule"/>
</dbReference>
<dbReference type="CDD" id="cd13957">
    <property type="entry name" value="PT_UbiA_Cox10"/>
    <property type="match status" value="1"/>
</dbReference>
<dbReference type="FunFam" id="1.10.357.140:FF:000001">
    <property type="entry name" value="Protoheme IX farnesyltransferase"/>
    <property type="match status" value="1"/>
</dbReference>
<dbReference type="Gene3D" id="1.10.357.140">
    <property type="entry name" value="UbiA prenyltransferase"/>
    <property type="match status" value="1"/>
</dbReference>
<dbReference type="HAMAP" id="MF_00154">
    <property type="entry name" value="CyoE_CtaB"/>
    <property type="match status" value="1"/>
</dbReference>
<dbReference type="InterPro" id="IPR006369">
    <property type="entry name" value="Protohaem_IX_farnesylTrfase"/>
</dbReference>
<dbReference type="InterPro" id="IPR000537">
    <property type="entry name" value="UbiA_prenyltransferase"/>
</dbReference>
<dbReference type="InterPro" id="IPR030470">
    <property type="entry name" value="UbiA_prenylTrfase_CS"/>
</dbReference>
<dbReference type="InterPro" id="IPR044878">
    <property type="entry name" value="UbiA_sf"/>
</dbReference>
<dbReference type="NCBIfam" id="TIGR01473">
    <property type="entry name" value="cyoE_ctaB"/>
    <property type="match status" value="1"/>
</dbReference>
<dbReference type="NCBIfam" id="NF003348">
    <property type="entry name" value="PRK04375.1-1"/>
    <property type="match status" value="1"/>
</dbReference>
<dbReference type="PANTHER" id="PTHR43448">
    <property type="entry name" value="PROTOHEME IX FARNESYLTRANSFERASE, MITOCHONDRIAL"/>
    <property type="match status" value="1"/>
</dbReference>
<dbReference type="PANTHER" id="PTHR43448:SF2">
    <property type="entry name" value="PROTOHEME IX FARNESYLTRANSFERASE, MITOCHONDRIAL"/>
    <property type="match status" value="1"/>
</dbReference>
<dbReference type="Pfam" id="PF01040">
    <property type="entry name" value="UbiA"/>
    <property type="match status" value="1"/>
</dbReference>
<dbReference type="PROSITE" id="PS00943">
    <property type="entry name" value="UBIA"/>
    <property type="match status" value="1"/>
</dbReference>
<sequence length="292" mass="32719">MLKKYLFLTKPGILFGNFITTLGGFFLAAQGSIDILLLLLTLIGTTLVVASGCVVNNVIDQDIDTKMQRTQNRALVKKTISPTVALVYAFVLGVMGFSILWFGVNGYAFLFAMIGFIVYVGFYSLWTKRTSIHQTVIGSISGASPPVIGYTAVTHQFDVAALLLFLAYALWQMPHSWAIAIYRFDDYKNAGIPILPVARSIYRTKIECVIYILLFAAVLNGLYCFGYTNVFFLITFNALTAYWFYLSIIGFKAENDQLWAKRFFLYSVILITLLSLSFSFTYQSPAPNLPLF</sequence>
<gene>
    <name evidence="1" type="primary">cyoE</name>
    <name type="ordered locus">ABBFA_001294</name>
</gene>
<name>CYOE_ACIB3</name>
<organism>
    <name type="scientific">Acinetobacter baumannii (strain AB307-0294)</name>
    <dbReference type="NCBI Taxonomy" id="557600"/>
    <lineage>
        <taxon>Bacteria</taxon>
        <taxon>Pseudomonadati</taxon>
        <taxon>Pseudomonadota</taxon>
        <taxon>Gammaproteobacteria</taxon>
        <taxon>Moraxellales</taxon>
        <taxon>Moraxellaceae</taxon>
        <taxon>Acinetobacter</taxon>
        <taxon>Acinetobacter calcoaceticus/baumannii complex</taxon>
    </lineage>
</organism>
<protein>
    <recommendedName>
        <fullName evidence="1">Protoheme IX farnesyltransferase</fullName>
        <ecNumber evidence="1">2.5.1.141</ecNumber>
    </recommendedName>
    <alternativeName>
        <fullName evidence="1">Heme B farnesyltransferase</fullName>
    </alternativeName>
    <alternativeName>
        <fullName evidence="1">Heme O synthase</fullName>
    </alternativeName>
</protein>
<evidence type="ECO:0000255" key="1">
    <source>
        <dbReference type="HAMAP-Rule" id="MF_00154"/>
    </source>
</evidence>
<feature type="chain" id="PRO_1000199633" description="Protoheme IX farnesyltransferase">
    <location>
        <begin position="1"/>
        <end position="292"/>
    </location>
</feature>
<feature type="transmembrane region" description="Helical" evidence="1">
    <location>
        <begin position="13"/>
        <end position="33"/>
    </location>
</feature>
<feature type="transmembrane region" description="Helical" evidence="1">
    <location>
        <begin position="35"/>
        <end position="55"/>
    </location>
</feature>
<feature type="transmembrane region" description="Helical" evidence="1">
    <location>
        <begin position="84"/>
        <end position="104"/>
    </location>
</feature>
<feature type="transmembrane region" description="Helical" evidence="1">
    <location>
        <begin position="106"/>
        <end position="126"/>
    </location>
</feature>
<feature type="transmembrane region" description="Helical" evidence="1">
    <location>
        <begin position="135"/>
        <end position="155"/>
    </location>
</feature>
<feature type="transmembrane region" description="Helical" evidence="1">
    <location>
        <begin position="161"/>
        <end position="181"/>
    </location>
</feature>
<feature type="transmembrane region" description="Helical" evidence="1">
    <location>
        <begin position="206"/>
        <end position="226"/>
    </location>
</feature>
<feature type="transmembrane region" description="Helical" evidence="1">
    <location>
        <begin position="231"/>
        <end position="251"/>
    </location>
</feature>
<feature type="transmembrane region" description="Helical" evidence="1">
    <location>
        <begin position="263"/>
        <end position="283"/>
    </location>
</feature>
<comment type="function">
    <text evidence="1">Converts heme B (protoheme IX) to heme O by substitution of the vinyl group on carbon 2 of heme B porphyrin ring with a hydroxyethyl farnesyl side group.</text>
</comment>
<comment type="catalytic activity">
    <reaction evidence="1">
        <text>heme b + (2E,6E)-farnesyl diphosphate + H2O = Fe(II)-heme o + diphosphate</text>
        <dbReference type="Rhea" id="RHEA:28070"/>
        <dbReference type="ChEBI" id="CHEBI:15377"/>
        <dbReference type="ChEBI" id="CHEBI:33019"/>
        <dbReference type="ChEBI" id="CHEBI:60344"/>
        <dbReference type="ChEBI" id="CHEBI:60530"/>
        <dbReference type="ChEBI" id="CHEBI:175763"/>
        <dbReference type="EC" id="2.5.1.141"/>
    </reaction>
</comment>
<comment type="pathway">
    <text evidence="1">Porphyrin-containing compound metabolism; heme O biosynthesis; heme O from protoheme: step 1/1.</text>
</comment>
<comment type="subcellular location">
    <subcellularLocation>
        <location evidence="1">Cell inner membrane</location>
        <topology evidence="1">Multi-pass membrane protein</topology>
    </subcellularLocation>
</comment>
<comment type="miscellaneous">
    <text evidence="1">Carbon 2 of the heme B porphyrin ring is defined according to the Fischer nomenclature.</text>
</comment>
<comment type="similarity">
    <text evidence="1">Belongs to the UbiA prenyltransferase family. Protoheme IX farnesyltransferase subfamily.</text>
</comment>